<gene>
    <name type="primary">CHZ1</name>
    <name type="ordered locus">CAGL0C02475g</name>
</gene>
<proteinExistence type="inferred from homology"/>
<organism>
    <name type="scientific">Candida glabrata (strain ATCC 2001 / BCRC 20586 / JCM 3761 / NBRC 0622 / NRRL Y-65 / CBS 138)</name>
    <name type="common">Yeast</name>
    <name type="synonym">Nakaseomyces glabratus</name>
    <dbReference type="NCBI Taxonomy" id="284593"/>
    <lineage>
        <taxon>Eukaryota</taxon>
        <taxon>Fungi</taxon>
        <taxon>Dikarya</taxon>
        <taxon>Ascomycota</taxon>
        <taxon>Saccharomycotina</taxon>
        <taxon>Saccharomycetes</taxon>
        <taxon>Saccharomycetales</taxon>
        <taxon>Saccharomycetaceae</taxon>
        <taxon>Nakaseomyces</taxon>
    </lineage>
</organism>
<sequence>MSEEKEVKPVVAENAEVPAKVEKKKRRRRNYDDYDAEVTESEKKKSKPSEASGKAGAAAAGDSDSESDIDDAKLDRLESNEDEEEDDLAEIDTSNIITTGRRTRGKIIDYKKTAKELDASEQKTDSAATEAAPGAADDEEDDDADFKE</sequence>
<feature type="chain" id="PRO_0000330206" description="Histone H2A.Z-specific chaperone CHZ1">
    <location>
        <begin position="1"/>
        <end position="148"/>
    </location>
</feature>
<feature type="region of interest" description="Disordered" evidence="2">
    <location>
        <begin position="1"/>
        <end position="148"/>
    </location>
</feature>
<feature type="compositionally biased region" description="Low complexity" evidence="2">
    <location>
        <begin position="49"/>
        <end position="62"/>
    </location>
</feature>
<feature type="compositionally biased region" description="Basic and acidic residues" evidence="2">
    <location>
        <begin position="70"/>
        <end position="79"/>
    </location>
</feature>
<feature type="compositionally biased region" description="Acidic residues" evidence="2">
    <location>
        <begin position="80"/>
        <end position="90"/>
    </location>
</feature>
<feature type="compositionally biased region" description="Basic and acidic residues" evidence="2">
    <location>
        <begin position="106"/>
        <end position="124"/>
    </location>
</feature>
<feature type="compositionally biased region" description="Low complexity" evidence="2">
    <location>
        <begin position="125"/>
        <end position="135"/>
    </location>
</feature>
<feature type="compositionally biased region" description="Acidic residues" evidence="2">
    <location>
        <begin position="136"/>
        <end position="148"/>
    </location>
</feature>
<accession>Q6FWW0</accession>
<reference key="1">
    <citation type="journal article" date="2004" name="Nature">
        <title>Genome evolution in yeasts.</title>
        <authorList>
            <person name="Dujon B."/>
            <person name="Sherman D."/>
            <person name="Fischer G."/>
            <person name="Durrens P."/>
            <person name="Casaregola S."/>
            <person name="Lafontaine I."/>
            <person name="de Montigny J."/>
            <person name="Marck C."/>
            <person name="Neuveglise C."/>
            <person name="Talla E."/>
            <person name="Goffard N."/>
            <person name="Frangeul L."/>
            <person name="Aigle M."/>
            <person name="Anthouard V."/>
            <person name="Babour A."/>
            <person name="Barbe V."/>
            <person name="Barnay S."/>
            <person name="Blanchin S."/>
            <person name="Beckerich J.-M."/>
            <person name="Beyne E."/>
            <person name="Bleykasten C."/>
            <person name="Boisrame A."/>
            <person name="Boyer J."/>
            <person name="Cattolico L."/>
            <person name="Confanioleri F."/>
            <person name="de Daruvar A."/>
            <person name="Despons L."/>
            <person name="Fabre E."/>
            <person name="Fairhead C."/>
            <person name="Ferry-Dumazet H."/>
            <person name="Groppi A."/>
            <person name="Hantraye F."/>
            <person name="Hennequin C."/>
            <person name="Jauniaux N."/>
            <person name="Joyet P."/>
            <person name="Kachouri R."/>
            <person name="Kerrest A."/>
            <person name="Koszul R."/>
            <person name="Lemaire M."/>
            <person name="Lesur I."/>
            <person name="Ma L."/>
            <person name="Muller H."/>
            <person name="Nicaud J.-M."/>
            <person name="Nikolski M."/>
            <person name="Oztas S."/>
            <person name="Ozier-Kalogeropoulos O."/>
            <person name="Pellenz S."/>
            <person name="Potier S."/>
            <person name="Richard G.-F."/>
            <person name="Straub M.-L."/>
            <person name="Suleau A."/>
            <person name="Swennen D."/>
            <person name="Tekaia F."/>
            <person name="Wesolowski-Louvel M."/>
            <person name="Westhof E."/>
            <person name="Wirth B."/>
            <person name="Zeniou-Meyer M."/>
            <person name="Zivanovic Y."/>
            <person name="Bolotin-Fukuhara M."/>
            <person name="Thierry A."/>
            <person name="Bouchier C."/>
            <person name="Caudron B."/>
            <person name="Scarpelli C."/>
            <person name="Gaillardin C."/>
            <person name="Weissenbach J."/>
            <person name="Wincker P."/>
            <person name="Souciet J.-L."/>
        </authorList>
    </citation>
    <scope>NUCLEOTIDE SEQUENCE [LARGE SCALE GENOMIC DNA]</scope>
    <source>
        <strain>ATCC 2001 / BCRC 20586 / JCM 3761 / NBRC 0622 / NRRL Y-65 / CBS 138</strain>
    </source>
</reference>
<keyword id="KW-0143">Chaperone</keyword>
<keyword id="KW-0539">Nucleus</keyword>
<keyword id="KW-1185">Reference proteome</keyword>
<name>CHZ1_CANGA</name>
<protein>
    <recommendedName>
        <fullName>Histone H2A.Z-specific chaperone CHZ1</fullName>
    </recommendedName>
</protein>
<dbReference type="EMBL" id="CR380949">
    <property type="protein sequence ID" value="CAG58190.1"/>
    <property type="molecule type" value="Genomic_DNA"/>
</dbReference>
<dbReference type="RefSeq" id="XP_445284.1">
    <property type="nucleotide sequence ID" value="XM_445284.1"/>
</dbReference>
<dbReference type="SMR" id="Q6FWW0"/>
<dbReference type="STRING" id="284593.Q6FWW0"/>
<dbReference type="EnsemblFungi" id="CAGL0C02475g-T">
    <property type="protein sequence ID" value="CAGL0C02475g-T-p1"/>
    <property type="gene ID" value="CAGL0C02475g"/>
</dbReference>
<dbReference type="KEGG" id="cgr:2886809"/>
<dbReference type="CGD" id="CAL0127340">
    <property type="gene designation" value="CAGL0C02475g"/>
</dbReference>
<dbReference type="VEuPathDB" id="FungiDB:CAGL0C02475g"/>
<dbReference type="eggNOG" id="ENOG502SCUM">
    <property type="taxonomic scope" value="Eukaryota"/>
</dbReference>
<dbReference type="HOGENOM" id="CLU_126134_1_0_1"/>
<dbReference type="InParanoid" id="Q6FWW0"/>
<dbReference type="OMA" id="RTHYDDE"/>
<dbReference type="Proteomes" id="UP000002428">
    <property type="component" value="Chromosome C"/>
</dbReference>
<dbReference type="GO" id="GO:0005576">
    <property type="term" value="C:extracellular region"/>
    <property type="evidence" value="ECO:0000314"/>
    <property type="project" value="CGD"/>
</dbReference>
<dbReference type="GO" id="GO:0005634">
    <property type="term" value="C:nucleus"/>
    <property type="evidence" value="ECO:0007669"/>
    <property type="project" value="UniProtKB-SubCell"/>
</dbReference>
<dbReference type="GO" id="GO:0042393">
    <property type="term" value="F:histone binding"/>
    <property type="evidence" value="ECO:0007669"/>
    <property type="project" value="EnsemblFungi"/>
</dbReference>
<dbReference type="GO" id="GO:0006338">
    <property type="term" value="P:chromatin remodeling"/>
    <property type="evidence" value="ECO:0007669"/>
    <property type="project" value="EnsemblFungi"/>
</dbReference>
<dbReference type="InterPro" id="IPR019098">
    <property type="entry name" value="Histone_chaperone_domain_CHZ"/>
</dbReference>
<dbReference type="Pfam" id="PF09649">
    <property type="entry name" value="CHZ"/>
    <property type="match status" value="1"/>
</dbReference>
<dbReference type="SMART" id="SM01082">
    <property type="entry name" value="CHZ"/>
    <property type="match status" value="1"/>
</dbReference>
<comment type="function">
    <text evidence="1">Forms a chaperone-bound H2A.Z-H2B complex that acts as a source for SWR1 complex-dependent H2A to H2A.Z histone replacement in chromatin.</text>
</comment>
<comment type="subunit">
    <text evidence="1">Forms a heterotrimer with H2A.Z-H2B, stabilizing the association of the histone dimer. Also, with a lower affinity, forms a heterotrimer with H2A-H2B (By similarity).</text>
</comment>
<comment type="subcellular location">
    <subcellularLocation>
        <location evidence="1">Nucleus</location>
    </subcellularLocation>
</comment>
<comment type="similarity">
    <text evidence="3">Belongs to the CHZ1 family.</text>
</comment>
<evidence type="ECO:0000250" key="1"/>
<evidence type="ECO:0000256" key="2">
    <source>
        <dbReference type="SAM" id="MobiDB-lite"/>
    </source>
</evidence>
<evidence type="ECO:0000305" key="3"/>